<gene>
    <name type="primary">Adnp2</name>
    <name type="synonym">Kiaa0863</name>
    <name type="synonym">Zfp508</name>
    <name type="synonym">Znf508</name>
</gene>
<evidence type="ECO:0000250" key="1">
    <source>
        <dbReference type="UniProtKB" id="Q6IQ32"/>
    </source>
</evidence>
<evidence type="ECO:0000255" key="2">
    <source>
        <dbReference type="PROSITE-ProRule" id="PRU00042"/>
    </source>
</evidence>
<evidence type="ECO:0000255" key="3">
    <source>
        <dbReference type="PROSITE-ProRule" id="PRU00108"/>
    </source>
</evidence>
<evidence type="ECO:0000256" key="4">
    <source>
        <dbReference type="SAM" id="MobiDB-lite"/>
    </source>
</evidence>
<evidence type="ECO:0000269" key="5">
    <source>
    </source>
</evidence>
<evidence type="ECO:0000269" key="6">
    <source>
    </source>
</evidence>
<evidence type="ECO:0000305" key="7"/>
<organism>
    <name type="scientific">Mus musculus</name>
    <name type="common">Mouse</name>
    <dbReference type="NCBI Taxonomy" id="10090"/>
    <lineage>
        <taxon>Eukaryota</taxon>
        <taxon>Metazoa</taxon>
        <taxon>Chordata</taxon>
        <taxon>Craniata</taxon>
        <taxon>Vertebrata</taxon>
        <taxon>Euteleostomi</taxon>
        <taxon>Mammalia</taxon>
        <taxon>Eutheria</taxon>
        <taxon>Euarchontoglires</taxon>
        <taxon>Glires</taxon>
        <taxon>Rodentia</taxon>
        <taxon>Myomorpha</taxon>
        <taxon>Muroidea</taxon>
        <taxon>Muridae</taxon>
        <taxon>Murinae</taxon>
        <taxon>Mus</taxon>
        <taxon>Mus</taxon>
    </lineage>
</organism>
<accession>Q8CHC8</accession>
<accession>Q6P294</accession>
<accession>Q80VS0</accession>
<accession>Q811H5</accession>
<accession>Q8R1A2</accession>
<name>ADNP2_MOUSE</name>
<proteinExistence type="evidence at protein level"/>
<keyword id="KW-0238">DNA-binding</keyword>
<keyword id="KW-0371">Homeobox</keyword>
<keyword id="KW-1017">Isopeptide bond</keyword>
<keyword id="KW-0479">Metal-binding</keyword>
<keyword id="KW-0539">Nucleus</keyword>
<keyword id="KW-1185">Reference proteome</keyword>
<keyword id="KW-0677">Repeat</keyword>
<keyword id="KW-0804">Transcription</keyword>
<keyword id="KW-0805">Transcription regulation</keyword>
<keyword id="KW-0832">Ubl conjugation</keyword>
<keyword id="KW-0862">Zinc</keyword>
<keyword id="KW-0863">Zinc-finger</keyword>
<feature type="chain" id="PRO_0000280417" description="Activity-dependent neuroprotector homeobox protein 2">
    <location>
        <begin position="1"/>
        <end position="1165"/>
    </location>
</feature>
<feature type="zinc finger region" description="C2H2-type 1" evidence="2">
    <location>
        <begin position="73"/>
        <end position="96"/>
    </location>
</feature>
<feature type="zinc finger region" description="C2H2-type 2; degenerate" evidence="2">
    <location>
        <begin position="106"/>
        <end position="128"/>
    </location>
</feature>
<feature type="zinc finger region" description="C2H2-type 3; degenerate" evidence="2">
    <location>
        <begin position="155"/>
        <end position="178"/>
    </location>
</feature>
<feature type="zinc finger region" description="C2H2-type 4" evidence="2">
    <location>
        <begin position="215"/>
        <end position="240"/>
    </location>
</feature>
<feature type="zinc finger region" description="C2H2-type 5; degenerate" evidence="2">
    <location>
        <begin position="696"/>
        <end position="718"/>
    </location>
</feature>
<feature type="zinc finger region" description="C2H2-type 6; degenerate" evidence="2">
    <location>
        <begin position="724"/>
        <end position="746"/>
    </location>
</feature>
<feature type="zinc finger region" description="C2H2-type 7; degenerate" evidence="2">
    <location>
        <begin position="777"/>
        <end position="798"/>
    </location>
</feature>
<feature type="zinc finger region" description="C2H2-type 8" evidence="2">
    <location>
        <begin position="800"/>
        <end position="823"/>
    </location>
</feature>
<feature type="zinc finger region" description="C2H2-type 9" evidence="2">
    <location>
        <begin position="905"/>
        <end position="935"/>
    </location>
</feature>
<feature type="DNA-binding region" description="Homeobox" evidence="3">
    <location>
        <begin position="1090"/>
        <end position="1132"/>
    </location>
</feature>
<feature type="region of interest" description="Disordered" evidence="4">
    <location>
        <begin position="303"/>
        <end position="327"/>
    </location>
</feature>
<feature type="region of interest" description="Disordered" evidence="4">
    <location>
        <begin position="1005"/>
        <end position="1068"/>
    </location>
</feature>
<feature type="compositionally biased region" description="Low complexity" evidence="4">
    <location>
        <begin position="303"/>
        <end position="318"/>
    </location>
</feature>
<feature type="compositionally biased region" description="Basic and acidic residues" evidence="4">
    <location>
        <begin position="1009"/>
        <end position="1024"/>
    </location>
</feature>
<feature type="cross-link" description="Glycyl lysine isopeptide (Lys-Gly) (interchain with G-Cter in SUMO2)" evidence="1">
    <location>
        <position position="146"/>
    </location>
</feature>
<feature type="cross-link" description="Glycyl lysine isopeptide (Lys-Gly) (interchain with G-Cter in SUMO2)" evidence="1">
    <location>
        <position position="1009"/>
    </location>
</feature>
<feature type="cross-link" description="Glycyl lysine isopeptide (Lys-Gly) (interchain with G-Cter in SUMO2)" evidence="1">
    <location>
        <position position="1048"/>
    </location>
</feature>
<dbReference type="EMBL" id="AB093268">
    <property type="protein sequence ID" value="BAC41452.1"/>
    <property type="status" value="ALT_INIT"/>
    <property type="molecule type" value="mRNA"/>
</dbReference>
<dbReference type="EMBL" id="BC024969">
    <property type="protein sequence ID" value="AAH24969.1"/>
    <property type="status" value="ALT_INIT"/>
    <property type="molecule type" value="mRNA"/>
</dbReference>
<dbReference type="EMBL" id="BC044898">
    <property type="protein sequence ID" value="AAH44898.1"/>
    <property type="status" value="ALT_INIT"/>
    <property type="molecule type" value="mRNA"/>
</dbReference>
<dbReference type="EMBL" id="BC044904">
    <property type="protein sequence ID" value="AAH44904.1"/>
    <property type="molecule type" value="mRNA"/>
</dbReference>
<dbReference type="EMBL" id="BC064672">
    <property type="protein sequence ID" value="AAH64672.1"/>
    <property type="molecule type" value="mRNA"/>
</dbReference>
<dbReference type="CCDS" id="CCDS50332.1"/>
<dbReference type="RefSeq" id="NP_778193.1">
    <property type="nucleotide sequence ID" value="NM_175028.1"/>
</dbReference>
<dbReference type="RefSeq" id="XP_006526529.1">
    <property type="nucleotide sequence ID" value="XM_006526466.4"/>
</dbReference>
<dbReference type="BioGRID" id="232200">
    <property type="interactions" value="3"/>
</dbReference>
<dbReference type="FunCoup" id="Q8CHC8">
    <property type="interactions" value="2954"/>
</dbReference>
<dbReference type="STRING" id="10090.ENSMUSP00000068560"/>
<dbReference type="GlyGen" id="Q8CHC8">
    <property type="glycosylation" value="3 sites, 1 O-linked glycan (1 site)"/>
</dbReference>
<dbReference type="iPTMnet" id="Q8CHC8"/>
<dbReference type="PhosphoSitePlus" id="Q8CHC8"/>
<dbReference type="PaxDb" id="10090-ENSMUSP00000068560"/>
<dbReference type="PeptideAtlas" id="Q8CHC8"/>
<dbReference type="ProteomicsDB" id="285554"/>
<dbReference type="Antibodypedia" id="1760">
    <property type="antibodies" value="63 antibodies from 16 providers"/>
</dbReference>
<dbReference type="Ensembl" id="ENSMUST00000066743.11">
    <property type="protein sequence ID" value="ENSMUSP00000068560.9"/>
    <property type="gene ID" value="ENSMUSG00000053950.11"/>
</dbReference>
<dbReference type="GeneID" id="240442"/>
<dbReference type="KEGG" id="mmu:240442"/>
<dbReference type="UCSC" id="uc008fsk.1">
    <property type="organism name" value="mouse"/>
</dbReference>
<dbReference type="AGR" id="MGI:2448562"/>
<dbReference type="CTD" id="22850"/>
<dbReference type="MGI" id="MGI:2448562">
    <property type="gene designation" value="Adnp2"/>
</dbReference>
<dbReference type="VEuPathDB" id="HostDB:ENSMUSG00000053950"/>
<dbReference type="eggNOG" id="ENOG502QU0M">
    <property type="taxonomic scope" value="Eukaryota"/>
</dbReference>
<dbReference type="GeneTree" id="ENSGT00530000063631"/>
<dbReference type="HOGENOM" id="CLU_009119_1_0_1"/>
<dbReference type="InParanoid" id="Q8CHC8"/>
<dbReference type="OMA" id="MEVAHKQ"/>
<dbReference type="OrthoDB" id="10053955at2759"/>
<dbReference type="PhylomeDB" id="Q8CHC8"/>
<dbReference type="TreeFam" id="TF328818"/>
<dbReference type="BioGRID-ORCS" id="240442">
    <property type="hits" value="3 hits in 76 CRISPR screens"/>
</dbReference>
<dbReference type="ChiTaRS" id="Adnp2">
    <property type="organism name" value="mouse"/>
</dbReference>
<dbReference type="PRO" id="PR:Q8CHC8"/>
<dbReference type="Proteomes" id="UP000000589">
    <property type="component" value="Chromosome 18"/>
</dbReference>
<dbReference type="RNAct" id="Q8CHC8">
    <property type="molecule type" value="protein"/>
</dbReference>
<dbReference type="Bgee" id="ENSMUSG00000053950">
    <property type="expression patterns" value="Expressed in ascending aorta and 213 other cell types or tissues"/>
</dbReference>
<dbReference type="GO" id="GO:0005634">
    <property type="term" value="C:nucleus"/>
    <property type="evidence" value="ECO:0007669"/>
    <property type="project" value="UniProtKB-SubCell"/>
</dbReference>
<dbReference type="GO" id="GO:0003677">
    <property type="term" value="F:DNA binding"/>
    <property type="evidence" value="ECO:0007669"/>
    <property type="project" value="UniProtKB-KW"/>
</dbReference>
<dbReference type="GO" id="GO:0008270">
    <property type="term" value="F:zinc ion binding"/>
    <property type="evidence" value="ECO:0007669"/>
    <property type="project" value="UniProtKB-KW"/>
</dbReference>
<dbReference type="GO" id="GO:0007399">
    <property type="term" value="P:nervous system development"/>
    <property type="evidence" value="ECO:0000270"/>
    <property type="project" value="UniProtKB"/>
</dbReference>
<dbReference type="CDD" id="cd00086">
    <property type="entry name" value="homeodomain"/>
    <property type="match status" value="1"/>
</dbReference>
<dbReference type="Gene3D" id="6.20.250.40">
    <property type="match status" value="1"/>
</dbReference>
<dbReference type="Gene3D" id="3.30.160.60">
    <property type="entry name" value="Classic Zinc Finger"/>
    <property type="match status" value="1"/>
</dbReference>
<dbReference type="InterPro" id="IPR038861">
    <property type="entry name" value="ADNP/ADNP2"/>
</dbReference>
<dbReference type="InterPro" id="IPR045762">
    <property type="entry name" value="ADNP_Znf"/>
</dbReference>
<dbReference type="InterPro" id="IPR001356">
    <property type="entry name" value="HD"/>
</dbReference>
<dbReference type="InterPro" id="IPR009057">
    <property type="entry name" value="Homeodomain-like_sf"/>
</dbReference>
<dbReference type="InterPro" id="IPR013087">
    <property type="entry name" value="Znf_C2H2_type"/>
</dbReference>
<dbReference type="PANTHER" id="PTHR15740:SF2">
    <property type="entry name" value="ACTIVITY-DEPENDENT NEUROPROTECTOR HOMEOBOX PROTEIN 2"/>
    <property type="match status" value="1"/>
</dbReference>
<dbReference type="PANTHER" id="PTHR15740">
    <property type="entry name" value="NEUROPROTECTIVE PEPTIDE-CONTAINING PROTEIN"/>
    <property type="match status" value="1"/>
</dbReference>
<dbReference type="Pfam" id="PF19627">
    <property type="entry name" value="ADNP_N"/>
    <property type="match status" value="3"/>
</dbReference>
<dbReference type="SMART" id="SM00389">
    <property type="entry name" value="HOX"/>
    <property type="match status" value="1"/>
</dbReference>
<dbReference type="SMART" id="SM00355">
    <property type="entry name" value="ZnF_C2H2"/>
    <property type="match status" value="9"/>
</dbReference>
<dbReference type="SUPFAM" id="SSF46689">
    <property type="entry name" value="Homeodomain-like"/>
    <property type="match status" value="1"/>
</dbReference>
<dbReference type="PROSITE" id="PS00028">
    <property type="entry name" value="ZINC_FINGER_C2H2_1"/>
    <property type="match status" value="2"/>
</dbReference>
<dbReference type="PROSITE" id="PS50157">
    <property type="entry name" value="ZINC_FINGER_C2H2_2"/>
    <property type="match status" value="1"/>
</dbReference>
<reference key="1">
    <citation type="journal article" date="2002" name="DNA Res.">
        <title>Prediction of the coding sequences of mouse homologues of KIAA gene: I. The complete nucleotide sequences of 100 mouse KIAA-homologous cDNAs identified by screening of terminal sequences of cDNA clones randomly sampled from size-fractionated libraries.</title>
        <authorList>
            <person name="Okazaki N."/>
            <person name="Kikuno R."/>
            <person name="Ohara R."/>
            <person name="Inamoto S."/>
            <person name="Hara Y."/>
            <person name="Nagase T."/>
            <person name="Ohara O."/>
            <person name="Koga H."/>
        </authorList>
    </citation>
    <scope>NUCLEOTIDE SEQUENCE [LARGE SCALE MRNA]</scope>
</reference>
<reference key="2">
    <citation type="journal article" date="2004" name="Genome Res.">
        <title>The status, quality, and expansion of the NIH full-length cDNA project: the Mammalian Gene Collection (MGC).</title>
        <authorList>
            <consortium name="The MGC Project Team"/>
        </authorList>
    </citation>
    <scope>NUCLEOTIDE SEQUENCE [LARGE SCALE MRNA]</scope>
    <source>
        <strain>FVB/N</strain>
        <tissue>Eye</tissue>
        <tissue>Mammary tumor</tissue>
        <tissue>Salivary gland</tissue>
    </source>
</reference>
<reference key="3">
    <citation type="journal article" date="2008" name="J. Neurochem.">
        <title>Silencing of the ADNP-family member, ADNP2, results in changes in cellular viability under oxidative stress.</title>
        <authorList>
            <person name="Kushnir M."/>
            <person name="Dresner E."/>
            <person name="Mandel S."/>
            <person name="Gozes I."/>
        </authorList>
    </citation>
    <scope>FUNCTION</scope>
    <scope>TISSUE SPECIFICITY</scope>
    <scope>DEVELOPMENTAL STAGE</scope>
</reference>
<reference key="4">
    <citation type="journal article" date="2012" name="J. Biol. Chem.">
        <title>Novel evolutionary-conserved role for the activity-dependent neuroprotective protein (ADNP) family that is important for erythropoiesis.</title>
        <authorList>
            <person name="Dresner E."/>
            <person name="Malishkevich A."/>
            <person name="Arviv C."/>
            <person name="Leibman Barak S."/>
            <person name="Alon S."/>
            <person name="Ofir R."/>
            <person name="Gothilf Y."/>
            <person name="Gozes I."/>
        </authorList>
    </citation>
    <scope>FUNCTION</scope>
    <scope>INTERACTION WITH SMARCA4</scope>
</reference>
<protein>
    <recommendedName>
        <fullName>Activity-dependent neuroprotector homeobox protein 2</fullName>
        <shortName>ADNP homeobox protein 2</shortName>
    </recommendedName>
    <alternativeName>
        <fullName>Zinc finger protein 508</fullName>
    </alternativeName>
</protein>
<comment type="function">
    <text evidence="5 6">May be involved in transcriptional regulation (PubMed:23071114). May play a role in neuronal function; perhaps involved in protection of brain tissues from oxidative stress (PubMed:18179478). May be involved in erythroid differentiation (PubMed:23071114).</text>
</comment>
<comment type="subunit">
    <text evidence="6">May interact with SMARCA4/BRG1.</text>
</comment>
<comment type="subcellular location">
    <subcellularLocation>
        <location evidence="7">Nucleus</location>
    </subcellularLocation>
</comment>
<comment type="tissue specificity">
    <text evidence="5">Expressed widely, with the highest level in the brain.</text>
</comment>
<comment type="developmental stage">
    <text evidence="5">Expressed at 7.5 dpc, increasing by 9.5 dpc, concomitant with cranial neural tube closure, and at 11.5 dpc (PubMed:18179478). Expression levels were relatively stable between 12.5 dpc and birth, continuing into adulthood (PubMed:18179478).</text>
</comment>
<comment type="similarity">
    <text evidence="7">Belongs to the krueppel C2H2-type zinc-finger protein family.</text>
</comment>
<comment type="sequence caution" evidence="7">
    <conflict type="erroneous initiation">
        <sequence resource="EMBL-CDS" id="AAH24969"/>
    </conflict>
    <text>Truncated N-terminus.</text>
</comment>
<comment type="sequence caution" evidence="7">
    <conflict type="erroneous initiation">
        <sequence resource="EMBL-CDS" id="AAH44898"/>
    </conflict>
    <text>Extended N-terminus.</text>
</comment>
<comment type="sequence caution" evidence="7">
    <conflict type="erroneous initiation">
        <sequence resource="EMBL-CDS" id="BAC41452"/>
    </conflict>
    <text>Extended N-terminus.</text>
</comment>
<sequence length="1165" mass="126768">MFQIPVQNLDNIRKVRKRVKGILVDIGLDSCKELMKDLKSFDPGEKYFYNTSWGDVSPWEPSGKKARYRTKPYCCSLCRYSTKVLTSLKNHLHRYHEDEADQELMIPCPNCPFSSQPRVVGKHFRMFHAPARKVQSYTVNILGETKTSRSDVISFTCLKCNFSNTLYYSMKKHVLVAHFNYLINSYFGLRTEETGEQPKASDPVSVDKILPFDKYYCKKCSAIASSQDALMYHILTSDAHRDLENKLRSVISEHIKRTGFLKQMHIAPKPVTHLALPPNSSAPSIAAPPPCFQLALPQNSQSSGTVQSVTVTPGTSGSLTHSPPTTAQSHVALVSSSLPVCQSSLSLQQSAPPPVFLSHSVALNQPVNTAVLPLTQPVGPVNKSVGTSILPVNQAMCSVNQAVRPGLLPLTKPMGPMNRPVGPAVLPMGPSVNSGVLQATSPGVISVGRAVPSGVLPAGQVTPAGVIPGQTATSGVLPTGQVVQSSTLPVGQTAPSRGLPPGQTVPLRVLPAGQVVPSGLLSSNQTVPSGVVPVNQGVNSGVLQLGQPVTPGVLPVGPPVRPGVLQLSPSVSTSILPMSQPVRAGTSQNTTFFTSGSILRQLIPTGKQVNGIPTYTLAPVSVTLPVPSGGGLAAVGPPPQVPVQFLPSGSGTQMGSSLPSLPSPQVLVSPAPSVFVQATPPLADANQALKQAKQWKTCPVCNELFPSNVYQVHMEVAHKQSEAQLCQVCNELFPANVYQVHMEVAHKQSESKSSEKLEPEKLAACAPFLKWMREKTVRCLSCKCLVSQEELMHHLLMHGLGCLFCPCTFHDVRGLVEHSRTKHLGKKRLSMDYSNRGFQLDLDANGNLLFPHLDFITILPREKLGEREVYLAILAGIHSKSLVPVYVKVRPQPEVAPKIPNKQKLTCPFCLSTFMTADAYELHLKERHHVMPTVHTMLRSPAFKCIHCCGVYTGNMTLGAIAVHLLRCRSAPKDSSSDLQVQPGFIESSELLMVNGDVIPESTFPVKRKLPEGHLGPEDQRDGEEPQLTLDADASSGSEKGLGAVPLKRQKSEIRTEGSGPSEDSLQALALDPSKYEGRSYEEKKQFLRDYFHRRPYPSRKEVELLSSLLWVWKIDVASFFGKRRYICMKAIKTHKPSVLLGFDMSELKNVKHRLNFGECESQKL</sequence>